<keyword id="KW-1185">Reference proteome</keyword>
<sequence length="119" mass="13534">MALVQSDENDFHALREAQRMVDSCQDFADHLIVAEFLPHCRGVAYINIRTLEQVIYCVQLSRAGYRIVSYEFDDVADEVANCDTVYESAHQLLAGISPLYGEKYGFGREPLGKRKEKQS</sequence>
<organism>
    <name type="scientific">Drosophila melanogaster</name>
    <name type="common">Fruit fly</name>
    <dbReference type="NCBI Taxonomy" id="7227"/>
    <lineage>
        <taxon>Eukaryota</taxon>
        <taxon>Metazoa</taxon>
        <taxon>Ecdysozoa</taxon>
        <taxon>Arthropoda</taxon>
        <taxon>Hexapoda</taxon>
        <taxon>Insecta</taxon>
        <taxon>Pterygota</taxon>
        <taxon>Neoptera</taxon>
        <taxon>Endopterygota</taxon>
        <taxon>Diptera</taxon>
        <taxon>Brachycera</taxon>
        <taxon>Muscomorpha</taxon>
        <taxon>Ephydroidea</taxon>
        <taxon>Drosophilidae</taxon>
        <taxon>Drosophila</taxon>
        <taxon>Sophophora</taxon>
    </lineage>
</organism>
<gene>
    <name type="ORF">CG14505</name>
</gene>
<proteinExistence type="inferred from homology"/>
<dbReference type="EMBL" id="AE013599">
    <property type="protein sequence ID" value="AAF57714.1"/>
    <property type="molecule type" value="Genomic_DNA"/>
</dbReference>
<dbReference type="EMBL" id="AY084100">
    <property type="protein sequence ID" value="AAL89838.1"/>
    <property type="molecule type" value="mRNA"/>
</dbReference>
<dbReference type="RefSeq" id="NP_001036558.1">
    <property type="nucleotide sequence ID" value="NM_001043093.2"/>
</dbReference>
<dbReference type="RefSeq" id="NP_001246404.1">
    <property type="nucleotide sequence ID" value="NM_001259475.1"/>
</dbReference>
<dbReference type="SMR" id="Q9V8F3"/>
<dbReference type="FunCoup" id="Q9V8F3">
    <property type="interactions" value="2"/>
</dbReference>
<dbReference type="STRING" id="7227.FBpp0298015"/>
<dbReference type="PaxDb" id="7227-FBpp0110100"/>
<dbReference type="DNASU" id="37098"/>
<dbReference type="EnsemblMetazoa" id="FBtr0110803">
    <property type="protein sequence ID" value="FBpp0110100"/>
    <property type="gene ID" value="FBgn0034327"/>
</dbReference>
<dbReference type="EnsemblMetazoa" id="FBtr0307186">
    <property type="protein sequence ID" value="FBpp0298015"/>
    <property type="gene ID" value="FBgn0034327"/>
</dbReference>
<dbReference type="GeneID" id="37098"/>
<dbReference type="KEGG" id="dme:Dmel_CG14505"/>
<dbReference type="UCSC" id="CG14505-RB">
    <property type="organism name" value="d. melanogaster"/>
</dbReference>
<dbReference type="AGR" id="FB:FBgn0034327"/>
<dbReference type="FlyBase" id="FBgn0034327">
    <property type="gene designation" value="CG14505"/>
</dbReference>
<dbReference type="VEuPathDB" id="VectorBase:FBgn0034327"/>
<dbReference type="eggNOG" id="KOG3965">
    <property type="taxonomic scope" value="Eukaryota"/>
</dbReference>
<dbReference type="GeneTree" id="ENSGT00390000009517"/>
<dbReference type="HOGENOM" id="CLU_2123566_0_0_1"/>
<dbReference type="InParanoid" id="Q9V8F3"/>
<dbReference type="OMA" id="LEQEIYC"/>
<dbReference type="OrthoDB" id="5804279at2759"/>
<dbReference type="PhylomeDB" id="Q9V8F3"/>
<dbReference type="BioGRID-ORCS" id="37098">
    <property type="hits" value="0 hits in 1 CRISPR screen"/>
</dbReference>
<dbReference type="GenomeRNAi" id="37098"/>
<dbReference type="PRO" id="PR:Q9V8F3"/>
<dbReference type="Proteomes" id="UP000000803">
    <property type="component" value="Chromosome 2R"/>
</dbReference>
<dbReference type="Bgee" id="FBgn0034327">
    <property type="expression patterns" value="Expressed in mid-late elongation-stage spermatid (Drosophila) in testis and 23 other cell types or tissues"/>
</dbReference>
<dbReference type="ExpressionAtlas" id="Q9V8F3">
    <property type="expression patterns" value="baseline and differential"/>
</dbReference>
<dbReference type="GO" id="GO:0005737">
    <property type="term" value="C:cytoplasm"/>
    <property type="evidence" value="ECO:0000318"/>
    <property type="project" value="GO_Central"/>
</dbReference>
<dbReference type="GO" id="GO:0019207">
    <property type="term" value="F:kinase regulator activity"/>
    <property type="evidence" value="ECO:0000318"/>
    <property type="project" value="GO_Central"/>
</dbReference>
<dbReference type="GO" id="GO:0051018">
    <property type="term" value="F:protein kinase A binding"/>
    <property type="evidence" value="ECO:0000318"/>
    <property type="project" value="GO_Central"/>
</dbReference>
<dbReference type="GO" id="GO:0060828">
    <property type="term" value="P:regulation of canonical Wnt signaling pathway"/>
    <property type="evidence" value="ECO:0007669"/>
    <property type="project" value="InterPro"/>
</dbReference>
<dbReference type="Gene3D" id="3.30.2280.10">
    <property type="entry name" value="Hypothetical protein (hspc210)"/>
    <property type="match status" value="1"/>
</dbReference>
<dbReference type="InterPro" id="IPR037395">
    <property type="entry name" value="GSKIP"/>
</dbReference>
<dbReference type="InterPro" id="IPR007967">
    <property type="entry name" value="GSKIP_dom"/>
</dbReference>
<dbReference type="InterPro" id="IPR023231">
    <property type="entry name" value="GSKIP_dom_sf"/>
</dbReference>
<dbReference type="PANTHER" id="PTHR12490">
    <property type="entry name" value="GSK3B-INTERACTING PROTEIN"/>
    <property type="match status" value="1"/>
</dbReference>
<dbReference type="PANTHER" id="PTHR12490:SF4">
    <property type="entry name" value="GSK3B-INTERACTING PROTEIN"/>
    <property type="match status" value="1"/>
</dbReference>
<dbReference type="Pfam" id="PF05303">
    <property type="entry name" value="GSKIP_dom"/>
    <property type="match status" value="1"/>
</dbReference>
<dbReference type="SUPFAM" id="SSF103107">
    <property type="entry name" value="Hypothetical protein c14orf129, hspc210"/>
    <property type="match status" value="1"/>
</dbReference>
<protein>
    <recommendedName>
        <fullName>Protein GSKIP homolog</fullName>
    </recommendedName>
</protein>
<evidence type="ECO:0000305" key="1"/>
<reference key="1">
    <citation type="journal article" date="2000" name="Science">
        <title>The genome sequence of Drosophila melanogaster.</title>
        <authorList>
            <person name="Adams M.D."/>
            <person name="Celniker S.E."/>
            <person name="Holt R.A."/>
            <person name="Evans C.A."/>
            <person name="Gocayne J.D."/>
            <person name="Amanatides P.G."/>
            <person name="Scherer S.E."/>
            <person name="Li P.W."/>
            <person name="Hoskins R.A."/>
            <person name="Galle R.F."/>
            <person name="George R.A."/>
            <person name="Lewis S.E."/>
            <person name="Richards S."/>
            <person name="Ashburner M."/>
            <person name="Henderson S.N."/>
            <person name="Sutton G.G."/>
            <person name="Wortman J.R."/>
            <person name="Yandell M.D."/>
            <person name="Zhang Q."/>
            <person name="Chen L.X."/>
            <person name="Brandon R.C."/>
            <person name="Rogers Y.-H.C."/>
            <person name="Blazej R.G."/>
            <person name="Champe M."/>
            <person name="Pfeiffer B.D."/>
            <person name="Wan K.H."/>
            <person name="Doyle C."/>
            <person name="Baxter E.G."/>
            <person name="Helt G."/>
            <person name="Nelson C.R."/>
            <person name="Miklos G.L.G."/>
            <person name="Abril J.F."/>
            <person name="Agbayani A."/>
            <person name="An H.-J."/>
            <person name="Andrews-Pfannkoch C."/>
            <person name="Baldwin D."/>
            <person name="Ballew R.M."/>
            <person name="Basu A."/>
            <person name="Baxendale J."/>
            <person name="Bayraktaroglu L."/>
            <person name="Beasley E.M."/>
            <person name="Beeson K.Y."/>
            <person name="Benos P.V."/>
            <person name="Berman B.P."/>
            <person name="Bhandari D."/>
            <person name="Bolshakov S."/>
            <person name="Borkova D."/>
            <person name="Botchan M.R."/>
            <person name="Bouck J."/>
            <person name="Brokstein P."/>
            <person name="Brottier P."/>
            <person name="Burtis K.C."/>
            <person name="Busam D.A."/>
            <person name="Butler H."/>
            <person name="Cadieu E."/>
            <person name="Center A."/>
            <person name="Chandra I."/>
            <person name="Cherry J.M."/>
            <person name="Cawley S."/>
            <person name="Dahlke C."/>
            <person name="Davenport L.B."/>
            <person name="Davies P."/>
            <person name="de Pablos B."/>
            <person name="Delcher A."/>
            <person name="Deng Z."/>
            <person name="Mays A.D."/>
            <person name="Dew I."/>
            <person name="Dietz S.M."/>
            <person name="Dodson K."/>
            <person name="Doup L.E."/>
            <person name="Downes M."/>
            <person name="Dugan-Rocha S."/>
            <person name="Dunkov B.C."/>
            <person name="Dunn P."/>
            <person name="Durbin K.J."/>
            <person name="Evangelista C.C."/>
            <person name="Ferraz C."/>
            <person name="Ferriera S."/>
            <person name="Fleischmann W."/>
            <person name="Fosler C."/>
            <person name="Gabrielian A.E."/>
            <person name="Garg N.S."/>
            <person name="Gelbart W.M."/>
            <person name="Glasser K."/>
            <person name="Glodek A."/>
            <person name="Gong F."/>
            <person name="Gorrell J.H."/>
            <person name="Gu Z."/>
            <person name="Guan P."/>
            <person name="Harris M."/>
            <person name="Harris N.L."/>
            <person name="Harvey D.A."/>
            <person name="Heiman T.J."/>
            <person name="Hernandez J.R."/>
            <person name="Houck J."/>
            <person name="Hostin D."/>
            <person name="Houston K.A."/>
            <person name="Howland T.J."/>
            <person name="Wei M.-H."/>
            <person name="Ibegwam C."/>
            <person name="Jalali M."/>
            <person name="Kalush F."/>
            <person name="Karpen G.H."/>
            <person name="Ke Z."/>
            <person name="Kennison J.A."/>
            <person name="Ketchum K.A."/>
            <person name="Kimmel B.E."/>
            <person name="Kodira C.D."/>
            <person name="Kraft C.L."/>
            <person name="Kravitz S."/>
            <person name="Kulp D."/>
            <person name="Lai Z."/>
            <person name="Lasko P."/>
            <person name="Lei Y."/>
            <person name="Levitsky A.A."/>
            <person name="Li J.H."/>
            <person name="Li Z."/>
            <person name="Liang Y."/>
            <person name="Lin X."/>
            <person name="Liu X."/>
            <person name="Mattei B."/>
            <person name="McIntosh T.C."/>
            <person name="McLeod M.P."/>
            <person name="McPherson D."/>
            <person name="Merkulov G."/>
            <person name="Milshina N.V."/>
            <person name="Mobarry C."/>
            <person name="Morris J."/>
            <person name="Moshrefi A."/>
            <person name="Mount S.M."/>
            <person name="Moy M."/>
            <person name="Murphy B."/>
            <person name="Murphy L."/>
            <person name="Muzny D.M."/>
            <person name="Nelson D.L."/>
            <person name="Nelson D.R."/>
            <person name="Nelson K.A."/>
            <person name="Nixon K."/>
            <person name="Nusskern D.R."/>
            <person name="Pacleb J.M."/>
            <person name="Palazzolo M."/>
            <person name="Pittman G.S."/>
            <person name="Pan S."/>
            <person name="Pollard J."/>
            <person name="Puri V."/>
            <person name="Reese M.G."/>
            <person name="Reinert K."/>
            <person name="Remington K."/>
            <person name="Saunders R.D.C."/>
            <person name="Scheeler F."/>
            <person name="Shen H."/>
            <person name="Shue B.C."/>
            <person name="Siden-Kiamos I."/>
            <person name="Simpson M."/>
            <person name="Skupski M.P."/>
            <person name="Smith T.J."/>
            <person name="Spier E."/>
            <person name="Spradling A.C."/>
            <person name="Stapleton M."/>
            <person name="Strong R."/>
            <person name="Sun E."/>
            <person name="Svirskas R."/>
            <person name="Tector C."/>
            <person name="Turner R."/>
            <person name="Venter E."/>
            <person name="Wang A.H."/>
            <person name="Wang X."/>
            <person name="Wang Z.-Y."/>
            <person name="Wassarman D.A."/>
            <person name="Weinstock G.M."/>
            <person name="Weissenbach J."/>
            <person name="Williams S.M."/>
            <person name="Woodage T."/>
            <person name="Worley K.C."/>
            <person name="Wu D."/>
            <person name="Yang S."/>
            <person name="Yao Q.A."/>
            <person name="Ye J."/>
            <person name="Yeh R.-F."/>
            <person name="Zaveri J.S."/>
            <person name="Zhan M."/>
            <person name="Zhang G."/>
            <person name="Zhao Q."/>
            <person name="Zheng L."/>
            <person name="Zheng X.H."/>
            <person name="Zhong F.N."/>
            <person name="Zhong W."/>
            <person name="Zhou X."/>
            <person name="Zhu S.C."/>
            <person name="Zhu X."/>
            <person name="Smith H.O."/>
            <person name="Gibbs R.A."/>
            <person name="Myers E.W."/>
            <person name="Rubin G.M."/>
            <person name="Venter J.C."/>
        </authorList>
    </citation>
    <scope>NUCLEOTIDE SEQUENCE [LARGE SCALE GENOMIC DNA]</scope>
    <source>
        <strain>Berkeley</strain>
    </source>
</reference>
<reference key="2">
    <citation type="journal article" date="2002" name="Genome Biol.">
        <title>Annotation of the Drosophila melanogaster euchromatic genome: a systematic review.</title>
        <authorList>
            <person name="Misra S."/>
            <person name="Crosby M.A."/>
            <person name="Mungall C.J."/>
            <person name="Matthews B.B."/>
            <person name="Campbell K.S."/>
            <person name="Hradecky P."/>
            <person name="Huang Y."/>
            <person name="Kaminker J.S."/>
            <person name="Millburn G.H."/>
            <person name="Prochnik S.E."/>
            <person name="Smith C.D."/>
            <person name="Tupy J.L."/>
            <person name="Whitfield E.J."/>
            <person name="Bayraktaroglu L."/>
            <person name="Berman B.P."/>
            <person name="Bettencourt B.R."/>
            <person name="Celniker S.E."/>
            <person name="de Grey A.D.N.J."/>
            <person name="Drysdale R.A."/>
            <person name="Harris N.L."/>
            <person name="Richter J."/>
            <person name="Russo S."/>
            <person name="Schroeder A.J."/>
            <person name="Shu S.Q."/>
            <person name="Stapleton M."/>
            <person name="Yamada C."/>
            <person name="Ashburner M."/>
            <person name="Gelbart W.M."/>
            <person name="Rubin G.M."/>
            <person name="Lewis S.E."/>
        </authorList>
    </citation>
    <scope>GENOME REANNOTATION</scope>
    <source>
        <strain>Berkeley</strain>
    </source>
</reference>
<reference key="3">
    <citation type="journal article" date="2002" name="Genome Biol.">
        <title>A Drosophila full-length cDNA resource.</title>
        <authorList>
            <person name="Stapleton M."/>
            <person name="Carlson J.W."/>
            <person name="Brokstein P."/>
            <person name="Yu C."/>
            <person name="Champe M."/>
            <person name="George R.A."/>
            <person name="Guarin H."/>
            <person name="Kronmiller B."/>
            <person name="Pacleb J.M."/>
            <person name="Park S."/>
            <person name="Wan K.H."/>
            <person name="Rubin G.M."/>
            <person name="Celniker S.E."/>
        </authorList>
    </citation>
    <scope>NUCLEOTIDE SEQUENCE [LARGE SCALE MRNA]</scope>
    <source>
        <strain>Berkeley</strain>
    </source>
</reference>
<feature type="chain" id="PRO_0000220954" description="Protein GSKIP homolog">
    <location>
        <begin position="1"/>
        <end position="119"/>
    </location>
</feature>
<comment type="similarity">
    <text evidence="1">Belongs to the GSKIP family.</text>
</comment>
<accession>Q9V8F3</accession>
<name>GSKIP_DROME</name>